<gene>
    <name evidence="1" type="primary">folD</name>
    <name type="ordered locus">ECDH10B_0485</name>
</gene>
<comment type="function">
    <text evidence="1">Catalyzes the oxidation of 5,10-methylenetetrahydrofolate to 5,10-methenyltetrahydrofolate and then the hydrolysis of 5,10-methenyltetrahydrofolate to 10-formyltetrahydrofolate.</text>
</comment>
<comment type="catalytic activity">
    <reaction evidence="1">
        <text>(6R)-5,10-methylene-5,6,7,8-tetrahydrofolate + NADP(+) = (6R)-5,10-methenyltetrahydrofolate + NADPH</text>
        <dbReference type="Rhea" id="RHEA:22812"/>
        <dbReference type="ChEBI" id="CHEBI:15636"/>
        <dbReference type="ChEBI" id="CHEBI:57455"/>
        <dbReference type="ChEBI" id="CHEBI:57783"/>
        <dbReference type="ChEBI" id="CHEBI:58349"/>
        <dbReference type="EC" id="1.5.1.5"/>
    </reaction>
</comment>
<comment type="catalytic activity">
    <reaction evidence="1">
        <text>(6R)-5,10-methenyltetrahydrofolate + H2O = (6R)-10-formyltetrahydrofolate + H(+)</text>
        <dbReference type="Rhea" id="RHEA:23700"/>
        <dbReference type="ChEBI" id="CHEBI:15377"/>
        <dbReference type="ChEBI" id="CHEBI:15378"/>
        <dbReference type="ChEBI" id="CHEBI:57455"/>
        <dbReference type="ChEBI" id="CHEBI:195366"/>
        <dbReference type="EC" id="3.5.4.9"/>
    </reaction>
</comment>
<comment type="pathway">
    <text evidence="1">One-carbon metabolism; tetrahydrofolate interconversion.</text>
</comment>
<comment type="subunit">
    <text evidence="1">Homodimer.</text>
</comment>
<comment type="similarity">
    <text evidence="1">Belongs to the tetrahydrofolate dehydrogenase/cyclohydrolase family.</text>
</comment>
<keyword id="KW-0028">Amino-acid biosynthesis</keyword>
<keyword id="KW-0368">Histidine biosynthesis</keyword>
<keyword id="KW-0378">Hydrolase</keyword>
<keyword id="KW-0486">Methionine biosynthesis</keyword>
<keyword id="KW-0511">Multifunctional enzyme</keyword>
<keyword id="KW-0521">NADP</keyword>
<keyword id="KW-0554">One-carbon metabolism</keyword>
<keyword id="KW-0560">Oxidoreductase</keyword>
<keyword id="KW-0658">Purine biosynthesis</keyword>
<name>FOLD_ECODH</name>
<protein>
    <recommendedName>
        <fullName evidence="1">Bifunctional protein FolD</fullName>
    </recommendedName>
    <domain>
        <recommendedName>
            <fullName evidence="1">Methylenetetrahydrofolate dehydrogenase</fullName>
            <ecNumber evidence="1">1.5.1.5</ecNumber>
        </recommendedName>
    </domain>
    <domain>
        <recommendedName>
            <fullName evidence="1">Methenyltetrahydrofolate cyclohydrolase</fullName>
            <ecNumber evidence="1">3.5.4.9</ecNumber>
        </recommendedName>
    </domain>
</protein>
<accession>B1XGC7</accession>
<evidence type="ECO:0000255" key="1">
    <source>
        <dbReference type="HAMAP-Rule" id="MF_01576"/>
    </source>
</evidence>
<reference key="1">
    <citation type="journal article" date="2008" name="J. Bacteriol.">
        <title>The complete genome sequence of Escherichia coli DH10B: insights into the biology of a laboratory workhorse.</title>
        <authorList>
            <person name="Durfee T."/>
            <person name="Nelson R."/>
            <person name="Baldwin S."/>
            <person name="Plunkett G. III"/>
            <person name="Burland V."/>
            <person name="Mau B."/>
            <person name="Petrosino J.F."/>
            <person name="Qin X."/>
            <person name="Muzny D.M."/>
            <person name="Ayele M."/>
            <person name="Gibbs R.A."/>
            <person name="Csorgo B."/>
            <person name="Posfai G."/>
            <person name="Weinstock G.M."/>
            <person name="Blattner F.R."/>
        </authorList>
    </citation>
    <scope>NUCLEOTIDE SEQUENCE [LARGE SCALE GENOMIC DNA]</scope>
    <source>
        <strain>K12 / DH10B</strain>
    </source>
</reference>
<dbReference type="EC" id="1.5.1.5" evidence="1"/>
<dbReference type="EC" id="3.5.4.9" evidence="1"/>
<dbReference type="EMBL" id="CP000948">
    <property type="protein sequence ID" value="ACB01654.1"/>
    <property type="molecule type" value="Genomic_DNA"/>
</dbReference>
<dbReference type="RefSeq" id="WP_000729160.1">
    <property type="nucleotide sequence ID" value="NC_010473.1"/>
</dbReference>
<dbReference type="SMR" id="B1XGC7"/>
<dbReference type="KEGG" id="ecd:ECDH10B_0485"/>
<dbReference type="HOGENOM" id="CLU_034045_2_1_6"/>
<dbReference type="UniPathway" id="UPA00193"/>
<dbReference type="GO" id="GO:0005829">
    <property type="term" value="C:cytosol"/>
    <property type="evidence" value="ECO:0007669"/>
    <property type="project" value="TreeGrafter"/>
</dbReference>
<dbReference type="GO" id="GO:0004477">
    <property type="term" value="F:methenyltetrahydrofolate cyclohydrolase activity"/>
    <property type="evidence" value="ECO:0007669"/>
    <property type="project" value="UniProtKB-UniRule"/>
</dbReference>
<dbReference type="GO" id="GO:0004488">
    <property type="term" value="F:methylenetetrahydrofolate dehydrogenase (NADP+) activity"/>
    <property type="evidence" value="ECO:0007669"/>
    <property type="project" value="UniProtKB-UniRule"/>
</dbReference>
<dbReference type="GO" id="GO:0000105">
    <property type="term" value="P:L-histidine biosynthetic process"/>
    <property type="evidence" value="ECO:0007669"/>
    <property type="project" value="UniProtKB-KW"/>
</dbReference>
<dbReference type="GO" id="GO:0009086">
    <property type="term" value="P:methionine biosynthetic process"/>
    <property type="evidence" value="ECO:0007669"/>
    <property type="project" value="UniProtKB-KW"/>
</dbReference>
<dbReference type="GO" id="GO:0006164">
    <property type="term" value="P:purine nucleotide biosynthetic process"/>
    <property type="evidence" value="ECO:0007669"/>
    <property type="project" value="UniProtKB-KW"/>
</dbReference>
<dbReference type="GO" id="GO:0035999">
    <property type="term" value="P:tetrahydrofolate interconversion"/>
    <property type="evidence" value="ECO:0007669"/>
    <property type="project" value="UniProtKB-UniRule"/>
</dbReference>
<dbReference type="CDD" id="cd01080">
    <property type="entry name" value="NAD_bind_m-THF_DH_Cyclohyd"/>
    <property type="match status" value="1"/>
</dbReference>
<dbReference type="FunFam" id="3.40.50.10860:FF:000001">
    <property type="entry name" value="Bifunctional protein FolD"/>
    <property type="match status" value="1"/>
</dbReference>
<dbReference type="FunFam" id="3.40.50.720:FF:000006">
    <property type="entry name" value="Bifunctional protein FolD"/>
    <property type="match status" value="1"/>
</dbReference>
<dbReference type="Gene3D" id="3.40.50.10860">
    <property type="entry name" value="Leucine Dehydrogenase, chain A, domain 1"/>
    <property type="match status" value="1"/>
</dbReference>
<dbReference type="Gene3D" id="3.40.50.720">
    <property type="entry name" value="NAD(P)-binding Rossmann-like Domain"/>
    <property type="match status" value="1"/>
</dbReference>
<dbReference type="HAMAP" id="MF_01576">
    <property type="entry name" value="THF_DHG_CYH"/>
    <property type="match status" value="1"/>
</dbReference>
<dbReference type="InterPro" id="IPR046346">
    <property type="entry name" value="Aminoacid_DH-like_N_sf"/>
</dbReference>
<dbReference type="InterPro" id="IPR036291">
    <property type="entry name" value="NAD(P)-bd_dom_sf"/>
</dbReference>
<dbReference type="InterPro" id="IPR000672">
    <property type="entry name" value="THF_DH/CycHdrlase"/>
</dbReference>
<dbReference type="InterPro" id="IPR020630">
    <property type="entry name" value="THF_DH/CycHdrlase_cat_dom"/>
</dbReference>
<dbReference type="InterPro" id="IPR020867">
    <property type="entry name" value="THF_DH/CycHdrlase_CS"/>
</dbReference>
<dbReference type="InterPro" id="IPR020631">
    <property type="entry name" value="THF_DH/CycHdrlase_NAD-bd_dom"/>
</dbReference>
<dbReference type="NCBIfam" id="NF008058">
    <property type="entry name" value="PRK10792.1"/>
    <property type="match status" value="1"/>
</dbReference>
<dbReference type="NCBIfam" id="NF010783">
    <property type="entry name" value="PRK14186.1"/>
    <property type="match status" value="1"/>
</dbReference>
<dbReference type="PANTHER" id="PTHR48099:SF5">
    <property type="entry name" value="C-1-TETRAHYDROFOLATE SYNTHASE, CYTOPLASMIC"/>
    <property type="match status" value="1"/>
</dbReference>
<dbReference type="PANTHER" id="PTHR48099">
    <property type="entry name" value="C-1-TETRAHYDROFOLATE SYNTHASE, CYTOPLASMIC-RELATED"/>
    <property type="match status" value="1"/>
</dbReference>
<dbReference type="Pfam" id="PF00763">
    <property type="entry name" value="THF_DHG_CYH"/>
    <property type="match status" value="1"/>
</dbReference>
<dbReference type="Pfam" id="PF02882">
    <property type="entry name" value="THF_DHG_CYH_C"/>
    <property type="match status" value="1"/>
</dbReference>
<dbReference type="PRINTS" id="PR00085">
    <property type="entry name" value="THFDHDRGNASE"/>
</dbReference>
<dbReference type="SUPFAM" id="SSF53223">
    <property type="entry name" value="Aminoacid dehydrogenase-like, N-terminal domain"/>
    <property type="match status" value="1"/>
</dbReference>
<dbReference type="SUPFAM" id="SSF51735">
    <property type="entry name" value="NAD(P)-binding Rossmann-fold domains"/>
    <property type="match status" value="1"/>
</dbReference>
<dbReference type="PROSITE" id="PS00766">
    <property type="entry name" value="THF_DHG_CYH_1"/>
    <property type="match status" value="1"/>
</dbReference>
<dbReference type="PROSITE" id="PS00767">
    <property type="entry name" value="THF_DHG_CYH_2"/>
    <property type="match status" value="1"/>
</dbReference>
<sequence>MAAKIIDGKTIAQQVRSEVAQKVQARIAAGLRAPGLAVVLVGSNPASQIYVASKRKACEEVGFVSRSYDLPETTSEAELLELIDTLNADNTIDGILVQLPLPAGIDNVKVLERIHPDKDVDGFHPYNVGRLCQRAPRLRPCTPRGIVTLLERYNIDTFGLNAVVIGASNIVGRPMSMELLLAGCTTTVTHRFTKNLRHHVENADLLIVAVGKPGFIPGDWIKEGAIVIDVGINRLENGKVVGDVVFEDAAKRASYITPVPGGVGPMTVATLIENTLQACVEYHDPQDE</sequence>
<organism>
    <name type="scientific">Escherichia coli (strain K12 / DH10B)</name>
    <dbReference type="NCBI Taxonomy" id="316385"/>
    <lineage>
        <taxon>Bacteria</taxon>
        <taxon>Pseudomonadati</taxon>
        <taxon>Pseudomonadota</taxon>
        <taxon>Gammaproteobacteria</taxon>
        <taxon>Enterobacterales</taxon>
        <taxon>Enterobacteriaceae</taxon>
        <taxon>Escherichia</taxon>
    </lineage>
</organism>
<feature type="chain" id="PRO_1000196771" description="Bifunctional protein FolD">
    <location>
        <begin position="1"/>
        <end position="288"/>
    </location>
</feature>
<feature type="binding site" evidence="1">
    <location>
        <begin position="166"/>
        <end position="168"/>
    </location>
    <ligand>
        <name>NADP(+)</name>
        <dbReference type="ChEBI" id="CHEBI:58349"/>
    </ligand>
</feature>
<feature type="binding site" evidence="1">
    <location>
        <position position="232"/>
    </location>
    <ligand>
        <name>NADP(+)</name>
        <dbReference type="ChEBI" id="CHEBI:58349"/>
    </ligand>
</feature>
<proteinExistence type="inferred from homology"/>